<name>ASTB_ECOL6</name>
<keyword id="KW-0056">Arginine metabolism</keyword>
<keyword id="KW-0378">Hydrolase</keyword>
<keyword id="KW-1185">Reference proteome</keyword>
<protein>
    <recommendedName>
        <fullName evidence="1">N-succinylarginine dihydrolase</fullName>
        <ecNumber evidence="1">3.5.3.23</ecNumber>
    </recommendedName>
</protein>
<gene>
    <name evidence="1" type="primary">astB</name>
    <name type="ordered locus">c2145</name>
</gene>
<feature type="chain" id="PRO_0000262351" description="N-succinylarginine dihydrolase">
    <location>
        <begin position="1"/>
        <end position="447"/>
    </location>
</feature>
<feature type="active site" evidence="1">
    <location>
        <position position="174"/>
    </location>
</feature>
<feature type="active site" evidence="1">
    <location>
        <position position="248"/>
    </location>
</feature>
<feature type="active site" description="Nucleophile" evidence="1">
    <location>
        <position position="365"/>
    </location>
</feature>
<feature type="binding site" evidence="1">
    <location>
        <begin position="19"/>
        <end position="28"/>
    </location>
    <ligand>
        <name>substrate</name>
    </ligand>
</feature>
<feature type="binding site" evidence="1">
    <location>
        <position position="110"/>
    </location>
    <ligand>
        <name>substrate</name>
    </ligand>
</feature>
<feature type="binding site" evidence="1">
    <location>
        <begin position="137"/>
        <end position="138"/>
    </location>
    <ligand>
        <name>substrate</name>
    </ligand>
</feature>
<feature type="binding site" evidence="1">
    <location>
        <position position="212"/>
    </location>
    <ligand>
        <name>substrate</name>
    </ligand>
</feature>
<feature type="binding site" evidence="1">
    <location>
        <position position="250"/>
    </location>
    <ligand>
        <name>substrate</name>
    </ligand>
</feature>
<feature type="binding site" evidence="1">
    <location>
        <position position="359"/>
    </location>
    <ligand>
        <name>substrate</name>
    </ligand>
</feature>
<reference key="1">
    <citation type="journal article" date="2002" name="Proc. Natl. Acad. Sci. U.S.A.">
        <title>Extensive mosaic structure revealed by the complete genome sequence of uropathogenic Escherichia coli.</title>
        <authorList>
            <person name="Welch R.A."/>
            <person name="Burland V."/>
            <person name="Plunkett G. III"/>
            <person name="Redford P."/>
            <person name="Roesch P."/>
            <person name="Rasko D."/>
            <person name="Buckles E.L."/>
            <person name="Liou S.-R."/>
            <person name="Boutin A."/>
            <person name="Hackett J."/>
            <person name="Stroud D."/>
            <person name="Mayhew G.F."/>
            <person name="Rose D.J."/>
            <person name="Zhou S."/>
            <person name="Schwartz D.C."/>
            <person name="Perna N.T."/>
            <person name="Mobley H.L.T."/>
            <person name="Donnenberg M.S."/>
            <person name="Blattner F.R."/>
        </authorList>
    </citation>
    <scope>NUCLEOTIDE SEQUENCE [LARGE SCALE GENOMIC DNA]</scope>
    <source>
        <strain>CFT073 / ATCC 700928 / UPEC</strain>
    </source>
</reference>
<sequence length="447" mass="49352">MNAWEVNFDGLVGLTHHYAGLSFGNEASTRHRFQVSNPRLAAKQGLLKMKKLAGAGFPQAVIPPHERPFIPVLRQLGFSGSDEQVLEKVARQAPHWLSSVSSASPMWVANAATIAPSADTLDGKVHLTVANLNNKFHRSLEAPVTESLLKAIFNDEEKFSVHSALPQVALLGDEGAANHNRLGGHYGEPGMQIFVYGREEGNDTRPSRYPARQTREASEAVARLNQVNPQQVIFAQQNPDVIDQGVFHNDVIAVSNRQVLFCHQQAFARQSQLLANLRARVNGFMAIEVPATQVSVSDAVSTYLFNSQLLSRDDGSMVLVLPQECREHAGVWRYLNELLAADNPISELKVFDLRESMANGGGPACLRLRVVLTEEERRAVNPAVMMNDTLFNALNDWVDRYYRDRLTAADLADPQLLREGREALDTLTQLLDLGSVYPFQREGGGNG</sequence>
<proteinExistence type="inferred from homology"/>
<accession>Q8FH02</accession>
<dbReference type="EC" id="3.5.3.23" evidence="1"/>
<dbReference type="EMBL" id="AE014075">
    <property type="protein sequence ID" value="AAN80604.1"/>
    <property type="molecule type" value="Genomic_DNA"/>
</dbReference>
<dbReference type="RefSeq" id="WP_000994986.1">
    <property type="nucleotide sequence ID" value="NZ_CP051263.1"/>
</dbReference>
<dbReference type="SMR" id="Q8FH02"/>
<dbReference type="STRING" id="199310.c2145"/>
<dbReference type="KEGG" id="ecc:c2145"/>
<dbReference type="eggNOG" id="COG3724">
    <property type="taxonomic scope" value="Bacteria"/>
</dbReference>
<dbReference type="HOGENOM" id="CLU_053835_0_0_6"/>
<dbReference type="BioCyc" id="ECOL199310:C2145-MONOMER"/>
<dbReference type="UniPathway" id="UPA00185">
    <property type="reaction ID" value="UER00280"/>
</dbReference>
<dbReference type="Proteomes" id="UP000001410">
    <property type="component" value="Chromosome"/>
</dbReference>
<dbReference type="GO" id="GO:0009015">
    <property type="term" value="F:N-succinylarginine dihydrolase activity"/>
    <property type="evidence" value="ECO:0007669"/>
    <property type="project" value="UniProtKB-UniRule"/>
</dbReference>
<dbReference type="GO" id="GO:0019544">
    <property type="term" value="P:arginine catabolic process to glutamate"/>
    <property type="evidence" value="ECO:0007669"/>
    <property type="project" value="UniProtKB-UniRule"/>
</dbReference>
<dbReference type="GO" id="GO:0019545">
    <property type="term" value="P:arginine catabolic process to succinate"/>
    <property type="evidence" value="ECO:0007669"/>
    <property type="project" value="UniProtKB-UniRule"/>
</dbReference>
<dbReference type="FunFam" id="3.75.10.20:FF:000001">
    <property type="entry name" value="N-succinylarginine dihydrolase"/>
    <property type="match status" value="1"/>
</dbReference>
<dbReference type="Gene3D" id="3.75.10.20">
    <property type="entry name" value="Succinylarginine dihydrolase"/>
    <property type="match status" value="1"/>
</dbReference>
<dbReference type="HAMAP" id="MF_01172">
    <property type="entry name" value="AstB"/>
    <property type="match status" value="1"/>
</dbReference>
<dbReference type="InterPro" id="IPR037031">
    <property type="entry name" value="AstB_sf"/>
</dbReference>
<dbReference type="InterPro" id="IPR007079">
    <property type="entry name" value="SuccinylArg_d-Hdrlase_AstB"/>
</dbReference>
<dbReference type="NCBIfam" id="TIGR03241">
    <property type="entry name" value="arg_catab_astB"/>
    <property type="match status" value="1"/>
</dbReference>
<dbReference type="NCBIfam" id="NF009789">
    <property type="entry name" value="PRK13281.1"/>
    <property type="match status" value="1"/>
</dbReference>
<dbReference type="PANTHER" id="PTHR30420">
    <property type="entry name" value="N-SUCCINYLARGININE DIHYDROLASE"/>
    <property type="match status" value="1"/>
</dbReference>
<dbReference type="PANTHER" id="PTHR30420:SF2">
    <property type="entry name" value="N-SUCCINYLARGININE DIHYDROLASE"/>
    <property type="match status" value="1"/>
</dbReference>
<dbReference type="Pfam" id="PF04996">
    <property type="entry name" value="AstB"/>
    <property type="match status" value="1"/>
</dbReference>
<dbReference type="SUPFAM" id="SSF55909">
    <property type="entry name" value="Pentein"/>
    <property type="match status" value="1"/>
</dbReference>
<organism>
    <name type="scientific">Escherichia coli O6:H1 (strain CFT073 / ATCC 700928 / UPEC)</name>
    <dbReference type="NCBI Taxonomy" id="199310"/>
    <lineage>
        <taxon>Bacteria</taxon>
        <taxon>Pseudomonadati</taxon>
        <taxon>Pseudomonadota</taxon>
        <taxon>Gammaproteobacteria</taxon>
        <taxon>Enterobacterales</taxon>
        <taxon>Enterobacteriaceae</taxon>
        <taxon>Escherichia</taxon>
    </lineage>
</organism>
<comment type="function">
    <text evidence="1">Catalyzes the hydrolysis of N(2)-succinylarginine into N(2)-succinylornithine, ammonia and CO(2).</text>
</comment>
<comment type="catalytic activity">
    <reaction evidence="1">
        <text>N(2)-succinyl-L-arginine + 2 H2O + 2 H(+) = N(2)-succinyl-L-ornithine + 2 NH4(+) + CO2</text>
        <dbReference type="Rhea" id="RHEA:19533"/>
        <dbReference type="ChEBI" id="CHEBI:15377"/>
        <dbReference type="ChEBI" id="CHEBI:15378"/>
        <dbReference type="ChEBI" id="CHEBI:16526"/>
        <dbReference type="ChEBI" id="CHEBI:28938"/>
        <dbReference type="ChEBI" id="CHEBI:58241"/>
        <dbReference type="ChEBI" id="CHEBI:58514"/>
        <dbReference type="EC" id="3.5.3.23"/>
    </reaction>
</comment>
<comment type="pathway">
    <text evidence="1">Amino-acid degradation; L-arginine degradation via AST pathway; L-glutamate and succinate from L-arginine: step 2/5.</text>
</comment>
<comment type="subunit">
    <text evidence="1">Homodimer.</text>
</comment>
<comment type="similarity">
    <text evidence="1">Belongs to the succinylarginine dihydrolase family.</text>
</comment>
<evidence type="ECO:0000255" key="1">
    <source>
        <dbReference type="HAMAP-Rule" id="MF_01172"/>
    </source>
</evidence>